<comment type="function">
    <text evidence="1">Hydrolyzes both purine and pyrimidine ribonucleosides with a broad-substrate specificity.</text>
</comment>
<comment type="similarity">
    <text evidence="1">Belongs to the IUNH family. RihC subfamily.</text>
</comment>
<proteinExistence type="inferred from homology"/>
<name>RIHC_ECO57</name>
<sequence>MRLPIFLDTDPGIDDAVAIAAAIFAPELDLQLMTTVAGNVSVEKTTRNALQLLHFWNAEIPLAQGAAVPLVRAPRDAASVHGESGMAGYDFVEHNRKPLGIPAFLAIRDALMRAPEPVTLVAIGPLTNIALLLSQCPECKPYIRRLVIMGGSAGRGNCTPNAEFNIAADPEAAACVFRSGIEIVMCGLDVTNQAILTPDYLSTLPQLNRTGKMLHALFSHYRSGSMQSGLRMHDLCAIAWLVRPDLFTLKPCFVAVETQGEFTSGTTVVDIDGCLGKPANVQVALDLNVKGFQQWVAEVLALVP</sequence>
<protein>
    <recommendedName>
        <fullName evidence="1">Non-specific ribonucleoside hydrolase RihC</fullName>
        <ecNumber evidence="1">3.2.-.-</ecNumber>
    </recommendedName>
    <alternativeName>
        <fullName evidence="1">Purine/pyrimidine ribonucleoside hydrolase</fullName>
    </alternativeName>
</protein>
<organism>
    <name type="scientific">Escherichia coli O157:H7</name>
    <dbReference type="NCBI Taxonomy" id="83334"/>
    <lineage>
        <taxon>Bacteria</taxon>
        <taxon>Pseudomonadati</taxon>
        <taxon>Pseudomonadota</taxon>
        <taxon>Gammaproteobacteria</taxon>
        <taxon>Enterobacterales</taxon>
        <taxon>Enterobacteriaceae</taxon>
        <taxon>Escherichia</taxon>
    </lineage>
</organism>
<dbReference type="EC" id="3.2.-.-" evidence="1"/>
<dbReference type="EMBL" id="AE005174">
    <property type="protein sequence ID" value="AAG54332.1"/>
    <property type="molecule type" value="Genomic_DNA"/>
</dbReference>
<dbReference type="EMBL" id="BA000007">
    <property type="protein sequence ID" value="BAB33456.1"/>
    <property type="molecule type" value="Genomic_DNA"/>
</dbReference>
<dbReference type="PIR" id="A99633">
    <property type="entry name" value="A99633"/>
</dbReference>
<dbReference type="PIR" id="H85483">
    <property type="entry name" value="H85483"/>
</dbReference>
<dbReference type="RefSeq" id="NP_308060.1">
    <property type="nucleotide sequence ID" value="NC_002695.1"/>
</dbReference>
<dbReference type="RefSeq" id="WP_001239143.1">
    <property type="nucleotide sequence ID" value="NZ_VOAI01000002.1"/>
</dbReference>
<dbReference type="SMR" id="Q8XA41"/>
<dbReference type="STRING" id="155864.Z0035"/>
<dbReference type="GeneID" id="913429"/>
<dbReference type="KEGG" id="ece:Z0035"/>
<dbReference type="KEGG" id="ecs:ECs_0033"/>
<dbReference type="PATRIC" id="fig|386585.9.peg.128"/>
<dbReference type="eggNOG" id="COG1957">
    <property type="taxonomic scope" value="Bacteria"/>
</dbReference>
<dbReference type="HOGENOM" id="CLU_036838_2_2_6"/>
<dbReference type="OMA" id="HMHDPFA"/>
<dbReference type="Proteomes" id="UP000000558">
    <property type="component" value="Chromosome"/>
</dbReference>
<dbReference type="Proteomes" id="UP000002519">
    <property type="component" value="Chromosome"/>
</dbReference>
<dbReference type="GO" id="GO:0005829">
    <property type="term" value="C:cytosol"/>
    <property type="evidence" value="ECO:0007669"/>
    <property type="project" value="TreeGrafter"/>
</dbReference>
<dbReference type="GO" id="GO:0008477">
    <property type="term" value="F:purine nucleosidase activity"/>
    <property type="evidence" value="ECO:0007669"/>
    <property type="project" value="TreeGrafter"/>
</dbReference>
<dbReference type="GO" id="GO:0045437">
    <property type="term" value="F:uridine nucleosidase activity"/>
    <property type="evidence" value="ECO:0007669"/>
    <property type="project" value="UniProtKB-ARBA"/>
</dbReference>
<dbReference type="GO" id="GO:0006144">
    <property type="term" value="P:purine nucleobase metabolic process"/>
    <property type="evidence" value="ECO:0007669"/>
    <property type="project" value="UniProtKB-UniRule"/>
</dbReference>
<dbReference type="GO" id="GO:0006152">
    <property type="term" value="P:purine nucleoside catabolic process"/>
    <property type="evidence" value="ECO:0007669"/>
    <property type="project" value="TreeGrafter"/>
</dbReference>
<dbReference type="GO" id="GO:0006206">
    <property type="term" value="P:pyrimidine nucleobase metabolic process"/>
    <property type="evidence" value="ECO:0007669"/>
    <property type="project" value="UniProtKB-UniRule"/>
</dbReference>
<dbReference type="CDD" id="cd02651">
    <property type="entry name" value="nuc_hydro_IU_UC_XIUA"/>
    <property type="match status" value="1"/>
</dbReference>
<dbReference type="FunFam" id="3.90.245.10:FF:000002">
    <property type="entry name" value="Non-specific ribonucleoside hydrolase RihC"/>
    <property type="match status" value="1"/>
</dbReference>
<dbReference type="Gene3D" id="3.90.245.10">
    <property type="entry name" value="Ribonucleoside hydrolase-like"/>
    <property type="match status" value="1"/>
</dbReference>
<dbReference type="HAMAP" id="MF_01432">
    <property type="entry name" value="Nucleosid_hydro_RihC"/>
    <property type="match status" value="1"/>
</dbReference>
<dbReference type="InterPro" id="IPR015910">
    <property type="entry name" value="I/U_nuclsd_hydro_CS"/>
</dbReference>
<dbReference type="InterPro" id="IPR001910">
    <property type="entry name" value="Inosine/uridine_hydrolase_dom"/>
</dbReference>
<dbReference type="InterPro" id="IPR023186">
    <property type="entry name" value="IUNH"/>
</dbReference>
<dbReference type="InterPro" id="IPR022976">
    <property type="entry name" value="Nucleosid_hydro_RihC_nonspecif"/>
</dbReference>
<dbReference type="InterPro" id="IPR036452">
    <property type="entry name" value="Ribo_hydro-like"/>
</dbReference>
<dbReference type="NCBIfam" id="NF008036">
    <property type="entry name" value="PRK10768.1"/>
    <property type="match status" value="1"/>
</dbReference>
<dbReference type="PANTHER" id="PTHR12304">
    <property type="entry name" value="INOSINE-URIDINE PREFERRING NUCLEOSIDE HYDROLASE"/>
    <property type="match status" value="1"/>
</dbReference>
<dbReference type="PANTHER" id="PTHR12304:SF15">
    <property type="entry name" value="NON-SPECIFIC RIBONUCLEOSIDE HYDROLASE RIHC"/>
    <property type="match status" value="1"/>
</dbReference>
<dbReference type="Pfam" id="PF01156">
    <property type="entry name" value="IU_nuc_hydro"/>
    <property type="match status" value="1"/>
</dbReference>
<dbReference type="SUPFAM" id="SSF53590">
    <property type="entry name" value="Nucleoside hydrolase"/>
    <property type="match status" value="1"/>
</dbReference>
<dbReference type="PROSITE" id="PS01247">
    <property type="entry name" value="IUNH"/>
    <property type="match status" value="1"/>
</dbReference>
<keyword id="KW-0326">Glycosidase</keyword>
<keyword id="KW-0378">Hydrolase</keyword>
<keyword id="KW-1185">Reference proteome</keyword>
<reference key="1">
    <citation type="journal article" date="2001" name="Nature">
        <title>Genome sequence of enterohaemorrhagic Escherichia coli O157:H7.</title>
        <authorList>
            <person name="Perna N.T."/>
            <person name="Plunkett G. III"/>
            <person name="Burland V."/>
            <person name="Mau B."/>
            <person name="Glasner J.D."/>
            <person name="Rose D.J."/>
            <person name="Mayhew G.F."/>
            <person name="Evans P.S."/>
            <person name="Gregor J."/>
            <person name="Kirkpatrick H.A."/>
            <person name="Posfai G."/>
            <person name="Hackett J."/>
            <person name="Klink S."/>
            <person name="Boutin A."/>
            <person name="Shao Y."/>
            <person name="Miller L."/>
            <person name="Grotbeck E.J."/>
            <person name="Davis N.W."/>
            <person name="Lim A."/>
            <person name="Dimalanta E.T."/>
            <person name="Potamousis K."/>
            <person name="Apodaca J."/>
            <person name="Anantharaman T.S."/>
            <person name="Lin J."/>
            <person name="Yen G."/>
            <person name="Schwartz D.C."/>
            <person name="Welch R.A."/>
            <person name="Blattner F.R."/>
        </authorList>
    </citation>
    <scope>NUCLEOTIDE SEQUENCE [LARGE SCALE GENOMIC DNA]</scope>
    <source>
        <strain>O157:H7 / EDL933 / ATCC 700927 / EHEC</strain>
    </source>
</reference>
<reference key="2">
    <citation type="journal article" date="2001" name="DNA Res.">
        <title>Complete genome sequence of enterohemorrhagic Escherichia coli O157:H7 and genomic comparison with a laboratory strain K-12.</title>
        <authorList>
            <person name="Hayashi T."/>
            <person name="Makino K."/>
            <person name="Ohnishi M."/>
            <person name="Kurokawa K."/>
            <person name="Ishii K."/>
            <person name="Yokoyama K."/>
            <person name="Han C.-G."/>
            <person name="Ohtsubo E."/>
            <person name="Nakayama K."/>
            <person name="Murata T."/>
            <person name="Tanaka M."/>
            <person name="Tobe T."/>
            <person name="Iida T."/>
            <person name="Takami H."/>
            <person name="Honda T."/>
            <person name="Sasakawa C."/>
            <person name="Ogasawara N."/>
            <person name="Yasunaga T."/>
            <person name="Kuhara S."/>
            <person name="Shiba T."/>
            <person name="Hattori M."/>
            <person name="Shinagawa H."/>
        </authorList>
    </citation>
    <scope>NUCLEOTIDE SEQUENCE [LARGE SCALE GENOMIC DNA]</scope>
    <source>
        <strain>O157:H7 / Sakai / RIMD 0509952 / EHEC</strain>
    </source>
</reference>
<feature type="chain" id="PRO_0000206832" description="Non-specific ribonucleoside hydrolase RihC">
    <location>
        <begin position="1"/>
        <end position="304"/>
    </location>
</feature>
<feature type="active site" evidence="1">
    <location>
        <position position="233"/>
    </location>
</feature>
<gene>
    <name evidence="1" type="primary">rihC</name>
    <name type="ordered locus">Z0035</name>
    <name type="ordered locus">ECs0033</name>
</gene>
<accession>Q8XA41</accession>
<accession>Q7AHT3</accession>
<evidence type="ECO:0000255" key="1">
    <source>
        <dbReference type="HAMAP-Rule" id="MF_01432"/>
    </source>
</evidence>